<comment type="function">
    <text evidence="1">Binds together with bS18 to 16S ribosomal RNA.</text>
</comment>
<comment type="similarity">
    <text evidence="1">Belongs to the bacterial ribosomal protein bS6 family.</text>
</comment>
<protein>
    <recommendedName>
        <fullName evidence="1">Small ribosomal subunit protein bS6</fullName>
    </recommendedName>
    <alternativeName>
        <fullName evidence="2">30S ribosomal protein S6</fullName>
    </alternativeName>
</protein>
<dbReference type="EMBL" id="AE017354">
    <property type="protein sequence ID" value="AAU27674.1"/>
    <property type="molecule type" value="Genomic_DNA"/>
</dbReference>
<dbReference type="RefSeq" id="WP_010947321.1">
    <property type="nucleotide sequence ID" value="NC_002942.5"/>
</dbReference>
<dbReference type="RefSeq" id="YP_095621.1">
    <property type="nucleotide sequence ID" value="NC_002942.5"/>
</dbReference>
<dbReference type="SMR" id="Q5ZV48"/>
<dbReference type="STRING" id="272624.lpg1592"/>
<dbReference type="PaxDb" id="272624-lpg1592"/>
<dbReference type="GeneID" id="57035583"/>
<dbReference type="KEGG" id="lpn:lpg1592"/>
<dbReference type="PATRIC" id="fig|272624.6.peg.1668"/>
<dbReference type="eggNOG" id="COG0360">
    <property type="taxonomic scope" value="Bacteria"/>
</dbReference>
<dbReference type="HOGENOM" id="CLU_113441_6_1_6"/>
<dbReference type="OrthoDB" id="9812702at2"/>
<dbReference type="Proteomes" id="UP000000609">
    <property type="component" value="Chromosome"/>
</dbReference>
<dbReference type="GO" id="GO:0022627">
    <property type="term" value="C:cytosolic small ribosomal subunit"/>
    <property type="evidence" value="ECO:0007669"/>
    <property type="project" value="TreeGrafter"/>
</dbReference>
<dbReference type="GO" id="GO:0070181">
    <property type="term" value="F:small ribosomal subunit rRNA binding"/>
    <property type="evidence" value="ECO:0007669"/>
    <property type="project" value="TreeGrafter"/>
</dbReference>
<dbReference type="GO" id="GO:0003735">
    <property type="term" value="F:structural constituent of ribosome"/>
    <property type="evidence" value="ECO:0007669"/>
    <property type="project" value="InterPro"/>
</dbReference>
<dbReference type="GO" id="GO:0006412">
    <property type="term" value="P:translation"/>
    <property type="evidence" value="ECO:0007669"/>
    <property type="project" value="UniProtKB-UniRule"/>
</dbReference>
<dbReference type="CDD" id="cd00473">
    <property type="entry name" value="bS6"/>
    <property type="match status" value="1"/>
</dbReference>
<dbReference type="Gene3D" id="3.30.70.60">
    <property type="match status" value="1"/>
</dbReference>
<dbReference type="HAMAP" id="MF_00360">
    <property type="entry name" value="Ribosomal_bS6"/>
    <property type="match status" value="1"/>
</dbReference>
<dbReference type="InterPro" id="IPR000529">
    <property type="entry name" value="Ribosomal_bS6"/>
</dbReference>
<dbReference type="InterPro" id="IPR020815">
    <property type="entry name" value="Ribosomal_bS6_CS"/>
</dbReference>
<dbReference type="InterPro" id="IPR035980">
    <property type="entry name" value="Ribosomal_bS6_sf"/>
</dbReference>
<dbReference type="InterPro" id="IPR020814">
    <property type="entry name" value="Ribosomal_S6_plastid/chlpt"/>
</dbReference>
<dbReference type="InterPro" id="IPR014717">
    <property type="entry name" value="Transl_elong_EF1B/ribsomal_bS6"/>
</dbReference>
<dbReference type="NCBIfam" id="TIGR00166">
    <property type="entry name" value="S6"/>
    <property type="match status" value="1"/>
</dbReference>
<dbReference type="PANTHER" id="PTHR21011">
    <property type="entry name" value="MITOCHONDRIAL 28S RIBOSOMAL PROTEIN S6"/>
    <property type="match status" value="1"/>
</dbReference>
<dbReference type="PANTHER" id="PTHR21011:SF1">
    <property type="entry name" value="SMALL RIBOSOMAL SUBUNIT PROTEIN BS6M"/>
    <property type="match status" value="1"/>
</dbReference>
<dbReference type="Pfam" id="PF01250">
    <property type="entry name" value="Ribosomal_S6"/>
    <property type="match status" value="1"/>
</dbReference>
<dbReference type="SUPFAM" id="SSF54995">
    <property type="entry name" value="Ribosomal protein S6"/>
    <property type="match status" value="1"/>
</dbReference>
<dbReference type="PROSITE" id="PS01048">
    <property type="entry name" value="RIBOSOMAL_S6"/>
    <property type="match status" value="1"/>
</dbReference>
<proteinExistence type="inferred from homology"/>
<evidence type="ECO:0000255" key="1">
    <source>
        <dbReference type="HAMAP-Rule" id="MF_00360"/>
    </source>
</evidence>
<evidence type="ECO:0000305" key="2"/>
<accession>Q5ZV48</accession>
<reference key="1">
    <citation type="journal article" date="2004" name="Science">
        <title>The genomic sequence of the accidental pathogen Legionella pneumophila.</title>
        <authorList>
            <person name="Chien M."/>
            <person name="Morozova I."/>
            <person name="Shi S."/>
            <person name="Sheng H."/>
            <person name="Chen J."/>
            <person name="Gomez S.M."/>
            <person name="Asamani G."/>
            <person name="Hill K."/>
            <person name="Nuara J."/>
            <person name="Feder M."/>
            <person name="Rineer J."/>
            <person name="Greenberg J.J."/>
            <person name="Steshenko V."/>
            <person name="Park S.H."/>
            <person name="Zhao B."/>
            <person name="Teplitskaya E."/>
            <person name="Edwards J.R."/>
            <person name="Pampou S."/>
            <person name="Georghiou A."/>
            <person name="Chou I.-C."/>
            <person name="Iannuccilli W."/>
            <person name="Ulz M.E."/>
            <person name="Kim D.H."/>
            <person name="Geringer-Sameth A."/>
            <person name="Goldsberry C."/>
            <person name="Morozov P."/>
            <person name="Fischer S.G."/>
            <person name="Segal G."/>
            <person name="Qu X."/>
            <person name="Rzhetsky A."/>
            <person name="Zhang P."/>
            <person name="Cayanis E."/>
            <person name="De Jong P.J."/>
            <person name="Ju J."/>
            <person name="Kalachikov S."/>
            <person name="Shuman H.A."/>
            <person name="Russo J.J."/>
        </authorList>
    </citation>
    <scope>NUCLEOTIDE SEQUENCE [LARGE SCALE GENOMIC DNA]</scope>
    <source>
        <strain>Philadelphia 1 / ATCC 33152 / DSM 7513</strain>
    </source>
</reference>
<sequence>MRHYEIMFLVHPDQSEQVPGMVERYEGIITKHNGKIHRKEDLGRRQLAYSINKVHKAHYILMNVECNLDALNEIKNAFKFNDAILRHLITVQKQAITTESVLMKKEKETKVA</sequence>
<name>RS6_LEGPH</name>
<gene>
    <name evidence="1" type="primary">rpsF</name>
    <name type="ordered locus">lpg1592</name>
</gene>
<keyword id="KW-1185">Reference proteome</keyword>
<keyword id="KW-0687">Ribonucleoprotein</keyword>
<keyword id="KW-0689">Ribosomal protein</keyword>
<keyword id="KW-0694">RNA-binding</keyword>
<keyword id="KW-0699">rRNA-binding</keyword>
<organism>
    <name type="scientific">Legionella pneumophila subsp. pneumophila (strain Philadelphia 1 / ATCC 33152 / DSM 7513)</name>
    <dbReference type="NCBI Taxonomy" id="272624"/>
    <lineage>
        <taxon>Bacteria</taxon>
        <taxon>Pseudomonadati</taxon>
        <taxon>Pseudomonadota</taxon>
        <taxon>Gammaproteobacteria</taxon>
        <taxon>Legionellales</taxon>
        <taxon>Legionellaceae</taxon>
        <taxon>Legionella</taxon>
    </lineage>
</organism>
<feature type="chain" id="PRO_0000176783" description="Small ribosomal subunit protein bS6">
    <location>
        <begin position="1"/>
        <end position="112"/>
    </location>
</feature>